<proteinExistence type="inferred from homology"/>
<comment type="function">
    <text evidence="1">Poorly processive, error-prone DNA polymerase involved in untargeted mutagenesis. Copies undamaged DNA at stalled replication forks, which arise in vivo from mismatched or misaligned primer ends. These misaligned primers can be extended by PolIV. Exhibits no 3'-5' exonuclease (proofreading) activity. May be involved in translesional synthesis, in conjunction with the beta clamp from PolIII.</text>
</comment>
<comment type="catalytic activity">
    <reaction evidence="1">
        <text>DNA(n) + a 2'-deoxyribonucleoside 5'-triphosphate = DNA(n+1) + diphosphate</text>
        <dbReference type="Rhea" id="RHEA:22508"/>
        <dbReference type="Rhea" id="RHEA-COMP:17339"/>
        <dbReference type="Rhea" id="RHEA-COMP:17340"/>
        <dbReference type="ChEBI" id="CHEBI:33019"/>
        <dbReference type="ChEBI" id="CHEBI:61560"/>
        <dbReference type="ChEBI" id="CHEBI:173112"/>
        <dbReference type="EC" id="2.7.7.7"/>
    </reaction>
</comment>
<comment type="cofactor">
    <cofactor evidence="1">
        <name>Mg(2+)</name>
        <dbReference type="ChEBI" id="CHEBI:18420"/>
    </cofactor>
    <text evidence="1">Binds 2 magnesium ions per subunit.</text>
</comment>
<comment type="subunit">
    <text evidence="1">Monomer.</text>
</comment>
<comment type="subcellular location">
    <subcellularLocation>
        <location evidence="1">Cytoplasm</location>
    </subcellularLocation>
</comment>
<comment type="similarity">
    <text evidence="1">Belongs to the DNA polymerase type-Y family.</text>
</comment>
<gene>
    <name evidence="1" type="primary">dinB</name>
    <name type="ordered locus">Exig_0683</name>
</gene>
<reference key="1">
    <citation type="submission" date="2008-04" db="EMBL/GenBank/DDBJ databases">
        <title>Complete sequence of chromosome of Exiguobacterium sibiricum 255-15.</title>
        <authorList>
            <consortium name="US DOE Joint Genome Institute"/>
            <person name="Copeland A."/>
            <person name="Lucas S."/>
            <person name="Lapidus A."/>
            <person name="Glavina del Rio T."/>
            <person name="Dalin E."/>
            <person name="Tice H."/>
            <person name="Bruce D."/>
            <person name="Goodwin L."/>
            <person name="Pitluck S."/>
            <person name="Kiss H."/>
            <person name="Chertkov O."/>
            <person name="Monk C."/>
            <person name="Brettin T."/>
            <person name="Detter J.C."/>
            <person name="Han C."/>
            <person name="Kuske C.R."/>
            <person name="Schmutz J."/>
            <person name="Larimer F."/>
            <person name="Land M."/>
            <person name="Hauser L."/>
            <person name="Kyrpides N."/>
            <person name="Mikhailova N."/>
            <person name="Vishnivetskaya T."/>
            <person name="Rodrigues D.F."/>
            <person name="Gilichinsky D."/>
            <person name="Tiedje J."/>
            <person name="Richardson P."/>
        </authorList>
    </citation>
    <scope>NUCLEOTIDE SEQUENCE [LARGE SCALE GENOMIC DNA]</scope>
    <source>
        <strain>DSM 17290 / CCUG 55495 / CIP 109462 / JCM 13490 / 255-15</strain>
    </source>
</reference>
<organism>
    <name type="scientific">Exiguobacterium sibiricum (strain DSM 17290 / CCUG 55495 / CIP 109462 / JCM 13490 / 255-15)</name>
    <dbReference type="NCBI Taxonomy" id="262543"/>
    <lineage>
        <taxon>Bacteria</taxon>
        <taxon>Bacillati</taxon>
        <taxon>Bacillota</taxon>
        <taxon>Bacilli</taxon>
        <taxon>Bacillales</taxon>
        <taxon>Bacillales Family XII. Incertae Sedis</taxon>
        <taxon>Exiguobacterium</taxon>
    </lineage>
</organism>
<keyword id="KW-0963">Cytoplasm</keyword>
<keyword id="KW-0227">DNA damage</keyword>
<keyword id="KW-0234">DNA repair</keyword>
<keyword id="KW-0235">DNA replication</keyword>
<keyword id="KW-0238">DNA-binding</keyword>
<keyword id="KW-0239">DNA-directed DNA polymerase</keyword>
<keyword id="KW-0460">Magnesium</keyword>
<keyword id="KW-0479">Metal-binding</keyword>
<keyword id="KW-0515">Mutator protein</keyword>
<keyword id="KW-0548">Nucleotidyltransferase</keyword>
<keyword id="KW-1185">Reference proteome</keyword>
<keyword id="KW-0808">Transferase</keyword>
<name>DPO4_EXIS2</name>
<feature type="chain" id="PRO_1000164001" description="DNA polymerase IV">
    <location>
        <begin position="1"/>
        <end position="360"/>
    </location>
</feature>
<feature type="domain" description="UmuC" evidence="1">
    <location>
        <begin position="6"/>
        <end position="187"/>
    </location>
</feature>
<feature type="active site" evidence="1">
    <location>
        <position position="106"/>
    </location>
</feature>
<feature type="binding site" evidence="1">
    <location>
        <position position="10"/>
    </location>
    <ligand>
        <name>Mg(2+)</name>
        <dbReference type="ChEBI" id="CHEBI:18420"/>
    </ligand>
</feature>
<feature type="binding site" evidence="1">
    <location>
        <position position="105"/>
    </location>
    <ligand>
        <name>Mg(2+)</name>
        <dbReference type="ChEBI" id="CHEBI:18420"/>
    </ligand>
</feature>
<feature type="site" description="Substrate discrimination" evidence="1">
    <location>
        <position position="15"/>
    </location>
</feature>
<dbReference type="EC" id="2.7.7.7" evidence="1"/>
<dbReference type="EMBL" id="CP001022">
    <property type="protein sequence ID" value="ACB60164.1"/>
    <property type="molecule type" value="Genomic_DNA"/>
</dbReference>
<dbReference type="RefSeq" id="WP_012369588.1">
    <property type="nucleotide sequence ID" value="NC_010556.1"/>
</dbReference>
<dbReference type="SMR" id="B1YK83"/>
<dbReference type="STRING" id="262543.Exig_0683"/>
<dbReference type="KEGG" id="esi:Exig_0683"/>
<dbReference type="eggNOG" id="COG0389">
    <property type="taxonomic scope" value="Bacteria"/>
</dbReference>
<dbReference type="HOGENOM" id="CLU_012348_1_2_9"/>
<dbReference type="OrthoDB" id="9808813at2"/>
<dbReference type="Proteomes" id="UP000001681">
    <property type="component" value="Chromosome"/>
</dbReference>
<dbReference type="GO" id="GO:0005829">
    <property type="term" value="C:cytosol"/>
    <property type="evidence" value="ECO:0007669"/>
    <property type="project" value="TreeGrafter"/>
</dbReference>
<dbReference type="GO" id="GO:0003684">
    <property type="term" value="F:damaged DNA binding"/>
    <property type="evidence" value="ECO:0007669"/>
    <property type="project" value="InterPro"/>
</dbReference>
<dbReference type="GO" id="GO:0003887">
    <property type="term" value="F:DNA-directed DNA polymerase activity"/>
    <property type="evidence" value="ECO:0007669"/>
    <property type="project" value="UniProtKB-UniRule"/>
</dbReference>
<dbReference type="GO" id="GO:0000287">
    <property type="term" value="F:magnesium ion binding"/>
    <property type="evidence" value="ECO:0007669"/>
    <property type="project" value="UniProtKB-UniRule"/>
</dbReference>
<dbReference type="GO" id="GO:0006261">
    <property type="term" value="P:DNA-templated DNA replication"/>
    <property type="evidence" value="ECO:0007669"/>
    <property type="project" value="UniProtKB-UniRule"/>
</dbReference>
<dbReference type="GO" id="GO:0042276">
    <property type="term" value="P:error-prone translesion synthesis"/>
    <property type="evidence" value="ECO:0007669"/>
    <property type="project" value="TreeGrafter"/>
</dbReference>
<dbReference type="GO" id="GO:0009432">
    <property type="term" value="P:SOS response"/>
    <property type="evidence" value="ECO:0007669"/>
    <property type="project" value="TreeGrafter"/>
</dbReference>
<dbReference type="CDD" id="cd03586">
    <property type="entry name" value="PolY_Pol_IV_kappa"/>
    <property type="match status" value="1"/>
</dbReference>
<dbReference type="FunFam" id="3.30.1490.100:FF:000004">
    <property type="entry name" value="DNA polymerase IV"/>
    <property type="match status" value="1"/>
</dbReference>
<dbReference type="FunFam" id="3.40.1170.60:FF:000001">
    <property type="entry name" value="DNA polymerase IV"/>
    <property type="match status" value="1"/>
</dbReference>
<dbReference type="Gene3D" id="3.30.70.270">
    <property type="match status" value="1"/>
</dbReference>
<dbReference type="Gene3D" id="3.40.1170.60">
    <property type="match status" value="1"/>
</dbReference>
<dbReference type="Gene3D" id="1.10.150.20">
    <property type="entry name" value="5' to 3' exonuclease, C-terminal subdomain"/>
    <property type="match status" value="1"/>
</dbReference>
<dbReference type="Gene3D" id="3.30.1490.100">
    <property type="entry name" value="DNA polymerase, Y-family, little finger domain"/>
    <property type="match status" value="1"/>
</dbReference>
<dbReference type="HAMAP" id="MF_01113">
    <property type="entry name" value="DNApol_IV"/>
    <property type="match status" value="1"/>
</dbReference>
<dbReference type="InterPro" id="IPR043502">
    <property type="entry name" value="DNA/RNA_pol_sf"/>
</dbReference>
<dbReference type="InterPro" id="IPR036775">
    <property type="entry name" value="DNA_pol_Y-fam_lit_finger_sf"/>
</dbReference>
<dbReference type="InterPro" id="IPR017961">
    <property type="entry name" value="DNA_pol_Y-fam_little_finger"/>
</dbReference>
<dbReference type="InterPro" id="IPR050116">
    <property type="entry name" value="DNA_polymerase-Y"/>
</dbReference>
<dbReference type="InterPro" id="IPR022880">
    <property type="entry name" value="DNApol_IV"/>
</dbReference>
<dbReference type="InterPro" id="IPR053848">
    <property type="entry name" value="IMS_HHH_1"/>
</dbReference>
<dbReference type="InterPro" id="IPR043128">
    <property type="entry name" value="Rev_trsase/Diguanyl_cyclase"/>
</dbReference>
<dbReference type="InterPro" id="IPR001126">
    <property type="entry name" value="UmuC"/>
</dbReference>
<dbReference type="NCBIfam" id="NF002677">
    <property type="entry name" value="PRK02406.1"/>
    <property type="match status" value="1"/>
</dbReference>
<dbReference type="PANTHER" id="PTHR11076:SF33">
    <property type="entry name" value="DNA POLYMERASE KAPPA"/>
    <property type="match status" value="1"/>
</dbReference>
<dbReference type="PANTHER" id="PTHR11076">
    <property type="entry name" value="DNA REPAIR POLYMERASE UMUC / TRANSFERASE FAMILY MEMBER"/>
    <property type="match status" value="1"/>
</dbReference>
<dbReference type="Pfam" id="PF00817">
    <property type="entry name" value="IMS"/>
    <property type="match status" value="1"/>
</dbReference>
<dbReference type="Pfam" id="PF11799">
    <property type="entry name" value="IMS_C"/>
    <property type="match status" value="1"/>
</dbReference>
<dbReference type="Pfam" id="PF21999">
    <property type="entry name" value="IMS_HHH_1"/>
    <property type="match status" value="1"/>
</dbReference>
<dbReference type="SUPFAM" id="SSF56672">
    <property type="entry name" value="DNA/RNA polymerases"/>
    <property type="match status" value="1"/>
</dbReference>
<dbReference type="SUPFAM" id="SSF100879">
    <property type="entry name" value="Lesion bypass DNA polymerase (Y-family), little finger domain"/>
    <property type="match status" value="1"/>
</dbReference>
<dbReference type="PROSITE" id="PS50173">
    <property type="entry name" value="UMUC"/>
    <property type="match status" value="1"/>
</dbReference>
<protein>
    <recommendedName>
        <fullName evidence="1">DNA polymerase IV</fullName>
        <shortName evidence="1">Pol IV</shortName>
        <ecNumber evidence="1">2.7.7.7</ecNumber>
    </recommendedName>
</protein>
<evidence type="ECO:0000255" key="1">
    <source>
        <dbReference type="HAMAP-Rule" id="MF_01113"/>
    </source>
</evidence>
<sequence>MVGRKIIHVDMDAFYASVEQRDRPHLKGVPVIVGGPPHARGVVATCSYEARKYGIHSAMPSRRAFQLCPRAVFVRPRFEVYRAVSAQIMELFLEVTPLVEPLSLDEAYLDVTENNLQMTSATHIAQYILAEIKRRTGLTASAGVSNSKLVAKIASGHQKPNGLTVLPPDAVLPFLSGLKIGDLHGVGKVTEQTLQKHGFNTVADIQQSPIAELRGLLGRDRGTELYTMAHGEDERMVRPHRERKSIGSESTFEEDTEDIDTIFETLKREALSVVKTLNQKELVCRTVTIKWKTEDFQSRSKRYTFLEETADEDTLLRVTTKLFNEIEFSGPIRLIGMSVSHLEAPPLSKQLTWQDIDSYL</sequence>
<accession>B1YK83</accession>